<accession>B7VH19</accession>
<protein>
    <recommendedName>
        <fullName evidence="1">Serine--tRNA ligase</fullName>
        <ecNumber evidence="1">6.1.1.11</ecNumber>
    </recommendedName>
    <alternativeName>
        <fullName evidence="1">Seryl-tRNA synthetase</fullName>
        <shortName evidence="1">SerRS</shortName>
    </alternativeName>
    <alternativeName>
        <fullName evidence="1">Seryl-tRNA(Ser/Sec) synthetase</fullName>
    </alternativeName>
</protein>
<organism>
    <name type="scientific">Vibrio atlanticus (strain LGP32)</name>
    <name type="common">Vibrio splendidus (strain Mel32)</name>
    <dbReference type="NCBI Taxonomy" id="575788"/>
    <lineage>
        <taxon>Bacteria</taxon>
        <taxon>Pseudomonadati</taxon>
        <taxon>Pseudomonadota</taxon>
        <taxon>Gammaproteobacteria</taxon>
        <taxon>Vibrionales</taxon>
        <taxon>Vibrionaceae</taxon>
        <taxon>Vibrio</taxon>
    </lineage>
</organism>
<evidence type="ECO:0000255" key="1">
    <source>
        <dbReference type="HAMAP-Rule" id="MF_00176"/>
    </source>
</evidence>
<feature type="chain" id="PRO_1000199517" description="Serine--tRNA ligase">
    <location>
        <begin position="1"/>
        <end position="435"/>
    </location>
</feature>
<feature type="binding site" evidence="1">
    <location>
        <begin position="242"/>
        <end position="244"/>
    </location>
    <ligand>
        <name>L-serine</name>
        <dbReference type="ChEBI" id="CHEBI:33384"/>
    </ligand>
</feature>
<feature type="binding site" evidence="1">
    <location>
        <begin position="273"/>
        <end position="275"/>
    </location>
    <ligand>
        <name>ATP</name>
        <dbReference type="ChEBI" id="CHEBI:30616"/>
    </ligand>
</feature>
<feature type="binding site" evidence="1">
    <location>
        <position position="296"/>
    </location>
    <ligand>
        <name>L-serine</name>
        <dbReference type="ChEBI" id="CHEBI:33384"/>
    </ligand>
</feature>
<feature type="binding site" evidence="1">
    <location>
        <begin position="360"/>
        <end position="363"/>
    </location>
    <ligand>
        <name>ATP</name>
        <dbReference type="ChEBI" id="CHEBI:30616"/>
    </ligand>
</feature>
<feature type="binding site" evidence="1">
    <location>
        <position position="396"/>
    </location>
    <ligand>
        <name>L-serine</name>
        <dbReference type="ChEBI" id="CHEBI:33384"/>
    </ligand>
</feature>
<comment type="function">
    <text evidence="1">Catalyzes the attachment of serine to tRNA(Ser). Is also able to aminoacylate tRNA(Sec) with serine, to form the misacylated tRNA L-seryl-tRNA(Sec), which will be further converted into selenocysteinyl-tRNA(Sec).</text>
</comment>
<comment type="catalytic activity">
    <reaction evidence="1">
        <text>tRNA(Ser) + L-serine + ATP = L-seryl-tRNA(Ser) + AMP + diphosphate + H(+)</text>
        <dbReference type="Rhea" id="RHEA:12292"/>
        <dbReference type="Rhea" id="RHEA-COMP:9669"/>
        <dbReference type="Rhea" id="RHEA-COMP:9703"/>
        <dbReference type="ChEBI" id="CHEBI:15378"/>
        <dbReference type="ChEBI" id="CHEBI:30616"/>
        <dbReference type="ChEBI" id="CHEBI:33019"/>
        <dbReference type="ChEBI" id="CHEBI:33384"/>
        <dbReference type="ChEBI" id="CHEBI:78442"/>
        <dbReference type="ChEBI" id="CHEBI:78533"/>
        <dbReference type="ChEBI" id="CHEBI:456215"/>
        <dbReference type="EC" id="6.1.1.11"/>
    </reaction>
</comment>
<comment type="catalytic activity">
    <reaction evidence="1">
        <text>tRNA(Sec) + L-serine + ATP = L-seryl-tRNA(Sec) + AMP + diphosphate + H(+)</text>
        <dbReference type="Rhea" id="RHEA:42580"/>
        <dbReference type="Rhea" id="RHEA-COMP:9742"/>
        <dbReference type="Rhea" id="RHEA-COMP:10128"/>
        <dbReference type="ChEBI" id="CHEBI:15378"/>
        <dbReference type="ChEBI" id="CHEBI:30616"/>
        <dbReference type="ChEBI" id="CHEBI:33019"/>
        <dbReference type="ChEBI" id="CHEBI:33384"/>
        <dbReference type="ChEBI" id="CHEBI:78442"/>
        <dbReference type="ChEBI" id="CHEBI:78533"/>
        <dbReference type="ChEBI" id="CHEBI:456215"/>
        <dbReference type="EC" id="6.1.1.11"/>
    </reaction>
</comment>
<comment type="pathway">
    <text evidence="1">Aminoacyl-tRNA biosynthesis; selenocysteinyl-tRNA(Sec) biosynthesis; L-seryl-tRNA(Sec) from L-serine and tRNA(Sec): step 1/1.</text>
</comment>
<comment type="subunit">
    <text evidence="1">Homodimer. The tRNA molecule binds across the dimer.</text>
</comment>
<comment type="subcellular location">
    <subcellularLocation>
        <location evidence="1">Cytoplasm</location>
    </subcellularLocation>
</comment>
<comment type="domain">
    <text evidence="1">Consists of two distinct domains, a catalytic core and a N-terminal extension that is involved in tRNA binding.</text>
</comment>
<comment type="similarity">
    <text evidence="1">Belongs to the class-II aminoacyl-tRNA synthetase family. Type-1 seryl-tRNA synthetase subfamily.</text>
</comment>
<proteinExistence type="inferred from homology"/>
<keyword id="KW-0030">Aminoacyl-tRNA synthetase</keyword>
<keyword id="KW-0067">ATP-binding</keyword>
<keyword id="KW-0963">Cytoplasm</keyword>
<keyword id="KW-0436">Ligase</keyword>
<keyword id="KW-0547">Nucleotide-binding</keyword>
<keyword id="KW-0648">Protein biosynthesis</keyword>
<dbReference type="EC" id="6.1.1.11" evidence="1"/>
<dbReference type="EMBL" id="FM954972">
    <property type="protein sequence ID" value="CAV19219.1"/>
    <property type="molecule type" value="Genomic_DNA"/>
</dbReference>
<dbReference type="SMR" id="B7VH19"/>
<dbReference type="STRING" id="575788.VS_2043"/>
<dbReference type="KEGG" id="vsp:VS_2043"/>
<dbReference type="PATRIC" id="fig|575788.5.peg.3321"/>
<dbReference type="eggNOG" id="COG0172">
    <property type="taxonomic scope" value="Bacteria"/>
</dbReference>
<dbReference type="HOGENOM" id="CLU_023797_1_1_6"/>
<dbReference type="UniPathway" id="UPA00906">
    <property type="reaction ID" value="UER00895"/>
</dbReference>
<dbReference type="Proteomes" id="UP000009100">
    <property type="component" value="Chromosome 1"/>
</dbReference>
<dbReference type="GO" id="GO:0005737">
    <property type="term" value="C:cytoplasm"/>
    <property type="evidence" value="ECO:0007669"/>
    <property type="project" value="UniProtKB-SubCell"/>
</dbReference>
<dbReference type="GO" id="GO:0005524">
    <property type="term" value="F:ATP binding"/>
    <property type="evidence" value="ECO:0007669"/>
    <property type="project" value="UniProtKB-UniRule"/>
</dbReference>
<dbReference type="GO" id="GO:0004828">
    <property type="term" value="F:serine-tRNA ligase activity"/>
    <property type="evidence" value="ECO:0007669"/>
    <property type="project" value="UniProtKB-UniRule"/>
</dbReference>
<dbReference type="GO" id="GO:0016260">
    <property type="term" value="P:selenocysteine biosynthetic process"/>
    <property type="evidence" value="ECO:0007669"/>
    <property type="project" value="UniProtKB-UniRule"/>
</dbReference>
<dbReference type="GO" id="GO:0006434">
    <property type="term" value="P:seryl-tRNA aminoacylation"/>
    <property type="evidence" value="ECO:0007669"/>
    <property type="project" value="UniProtKB-UniRule"/>
</dbReference>
<dbReference type="CDD" id="cd00770">
    <property type="entry name" value="SerRS_core"/>
    <property type="match status" value="1"/>
</dbReference>
<dbReference type="FunFam" id="3.30.930.10:FF:000018">
    <property type="entry name" value="Serine--tRNA ligase"/>
    <property type="match status" value="1"/>
</dbReference>
<dbReference type="Gene3D" id="3.30.930.10">
    <property type="entry name" value="Bira Bifunctional Protein, Domain 2"/>
    <property type="match status" value="1"/>
</dbReference>
<dbReference type="Gene3D" id="1.10.287.40">
    <property type="entry name" value="Serine-tRNA synthetase, tRNA binding domain"/>
    <property type="match status" value="1"/>
</dbReference>
<dbReference type="HAMAP" id="MF_00176">
    <property type="entry name" value="Ser_tRNA_synth_type1"/>
    <property type="match status" value="1"/>
</dbReference>
<dbReference type="InterPro" id="IPR002314">
    <property type="entry name" value="aa-tRNA-synt_IIb"/>
</dbReference>
<dbReference type="InterPro" id="IPR006195">
    <property type="entry name" value="aa-tRNA-synth_II"/>
</dbReference>
<dbReference type="InterPro" id="IPR045864">
    <property type="entry name" value="aa-tRNA-synth_II/BPL/LPL"/>
</dbReference>
<dbReference type="InterPro" id="IPR002317">
    <property type="entry name" value="Ser-tRNA-ligase_type_1"/>
</dbReference>
<dbReference type="InterPro" id="IPR015866">
    <property type="entry name" value="Ser-tRNA-synth_1_N"/>
</dbReference>
<dbReference type="InterPro" id="IPR042103">
    <property type="entry name" value="SerRS_1_N_sf"/>
</dbReference>
<dbReference type="InterPro" id="IPR033729">
    <property type="entry name" value="SerRS_core"/>
</dbReference>
<dbReference type="InterPro" id="IPR010978">
    <property type="entry name" value="tRNA-bd_arm"/>
</dbReference>
<dbReference type="NCBIfam" id="TIGR00414">
    <property type="entry name" value="serS"/>
    <property type="match status" value="1"/>
</dbReference>
<dbReference type="PANTHER" id="PTHR43697:SF1">
    <property type="entry name" value="SERINE--TRNA LIGASE"/>
    <property type="match status" value="1"/>
</dbReference>
<dbReference type="PANTHER" id="PTHR43697">
    <property type="entry name" value="SERYL-TRNA SYNTHETASE"/>
    <property type="match status" value="1"/>
</dbReference>
<dbReference type="Pfam" id="PF02403">
    <property type="entry name" value="Seryl_tRNA_N"/>
    <property type="match status" value="1"/>
</dbReference>
<dbReference type="Pfam" id="PF00587">
    <property type="entry name" value="tRNA-synt_2b"/>
    <property type="match status" value="1"/>
</dbReference>
<dbReference type="PIRSF" id="PIRSF001529">
    <property type="entry name" value="Ser-tRNA-synth_IIa"/>
    <property type="match status" value="1"/>
</dbReference>
<dbReference type="PRINTS" id="PR00981">
    <property type="entry name" value="TRNASYNTHSER"/>
</dbReference>
<dbReference type="SUPFAM" id="SSF55681">
    <property type="entry name" value="Class II aaRS and biotin synthetases"/>
    <property type="match status" value="1"/>
</dbReference>
<dbReference type="SUPFAM" id="SSF46589">
    <property type="entry name" value="tRNA-binding arm"/>
    <property type="match status" value="1"/>
</dbReference>
<dbReference type="PROSITE" id="PS50862">
    <property type="entry name" value="AA_TRNA_LIGASE_II"/>
    <property type="match status" value="1"/>
</dbReference>
<gene>
    <name evidence="1" type="primary">serS</name>
    <name type="ordered locus">VS_2043</name>
</gene>
<reference key="1">
    <citation type="submission" date="2009-02" db="EMBL/GenBank/DDBJ databases">
        <title>Vibrio splendidus str. LGP32 complete genome.</title>
        <authorList>
            <person name="Mazel D."/>
            <person name="Le Roux F."/>
        </authorList>
    </citation>
    <scope>NUCLEOTIDE SEQUENCE [LARGE SCALE GENOMIC DNA]</scope>
    <source>
        <strain>LGP32</strain>
    </source>
</reference>
<name>SYS_VIBA3</name>
<sequence length="435" mass="48646">MLDSKLLRAELDETAAKLARRGFPLDVETIRELEEKRKSLQMKTEELQALRNSRSKSIGQAKAKGDHEEAERILAEVGNLGAELDQAKVTLAELQSELETITMSIPNLPDAEVPDGKDEDDNVEVSRWGQPKTYDFEVKDHVDLGEMSGGLDFASAVKISGSRFIVMKGKFARLHRAIAQFMLDLHTDEHGYTEMYVPYLVNHDSLYGTGQLPKFGEDLFHTSPLTEQVSDVPLKTLSLIPTAEVPVTNMVRDTITDEAELPLKMTAHTPCFRSEAGSYGRDTRGLIRMHQFDKVELVQITKPEDSMAALEELTGHAEKVLQLLELPYRKVILCTGDMGFGSAKTYDLEVWVPAQETYREISSCSNMWDFQARRMQARFRRKGEKKPELVHTLNGSGLAVGRTMVAILENNQEADGRIAIPTVLQPYMGGVTHIG</sequence>